<protein>
    <recommendedName>
        <fullName evidence="1">Tagatose-6-phosphate kinase</fullName>
        <ecNumber evidence="1">2.7.1.144</ecNumber>
    </recommendedName>
    <alternativeName>
        <fullName evidence="1">Phosphotagatokinase</fullName>
    </alternativeName>
</protein>
<accession>P65698</accession>
<accession>Q99S76</accession>
<sequence length="310" mass="33895">MILTLTLNPSVDISYPLTALKLDDVNRVQEVSKTAGGKGLNVTRVLAQVGEPVLASGFIGGELGQFIAKKLDHADIKHAFYNIKGETRNCIAILHEGQQTEILEQGPEIDNQEAAGFIKHFEQLLEKVEAVAISGSLPKGLNQDYYAQIIERCQNKGVPVILDCSGATLQTVLENPYKPTVIKPNISELYQLLNQPLDESLESLKQAVSQPLFEGIEWIIVSLGAQGAFAKHNHTFYRVNIPTINVLNPVGSGDSTVAGITSAILNHENDHDLLKKANTLGMLNAQEAQTGYVNLNNYDELFNQIEVLEV</sequence>
<feature type="chain" id="PRO_0000203920" description="Tagatose-6-phosphate kinase">
    <location>
        <begin position="1"/>
        <end position="310"/>
    </location>
</feature>
<comment type="catalytic activity">
    <reaction evidence="1">
        <text>D-tagatofuranose 6-phosphate + ATP = D-tagatofuranose 1,6-bisphosphate + ADP + H(+)</text>
        <dbReference type="Rhea" id="RHEA:12420"/>
        <dbReference type="ChEBI" id="CHEBI:15378"/>
        <dbReference type="ChEBI" id="CHEBI:30616"/>
        <dbReference type="ChEBI" id="CHEBI:58694"/>
        <dbReference type="ChEBI" id="CHEBI:58695"/>
        <dbReference type="ChEBI" id="CHEBI:456216"/>
        <dbReference type="EC" id="2.7.1.144"/>
    </reaction>
</comment>
<comment type="pathway">
    <text evidence="1">Carbohydrate metabolism; D-tagatose 6-phosphate degradation; D-glyceraldehyde 3-phosphate and glycerone phosphate from D-tagatose 6-phosphate: step 1/2.</text>
</comment>
<comment type="similarity">
    <text evidence="1">Belongs to the carbohydrate kinase PfkB family. LacC subfamily.</text>
</comment>
<name>LACC_STAAM</name>
<proteinExistence type="inferred from homology"/>
<reference key="1">
    <citation type="journal article" date="2001" name="Lancet">
        <title>Whole genome sequencing of meticillin-resistant Staphylococcus aureus.</title>
        <authorList>
            <person name="Kuroda M."/>
            <person name="Ohta T."/>
            <person name="Uchiyama I."/>
            <person name="Baba T."/>
            <person name="Yuzawa H."/>
            <person name="Kobayashi I."/>
            <person name="Cui L."/>
            <person name="Oguchi A."/>
            <person name="Aoki K."/>
            <person name="Nagai Y."/>
            <person name="Lian J.-Q."/>
            <person name="Ito T."/>
            <person name="Kanamori M."/>
            <person name="Matsumaru H."/>
            <person name="Maruyama A."/>
            <person name="Murakami H."/>
            <person name="Hosoyama A."/>
            <person name="Mizutani-Ui Y."/>
            <person name="Takahashi N.K."/>
            <person name="Sawano T."/>
            <person name="Inoue R."/>
            <person name="Kaito C."/>
            <person name="Sekimizu K."/>
            <person name="Hirakawa H."/>
            <person name="Kuhara S."/>
            <person name="Goto S."/>
            <person name="Yabuzaki J."/>
            <person name="Kanehisa M."/>
            <person name="Yamashita A."/>
            <person name="Oshima K."/>
            <person name="Furuya K."/>
            <person name="Yoshino C."/>
            <person name="Shiba T."/>
            <person name="Hattori M."/>
            <person name="Ogasawara N."/>
            <person name="Hayashi H."/>
            <person name="Hiramatsu K."/>
        </authorList>
    </citation>
    <scope>NUCLEOTIDE SEQUENCE [LARGE SCALE GENOMIC DNA]</scope>
    <source>
        <strain>Mu50 / ATCC 700699</strain>
    </source>
</reference>
<organism>
    <name type="scientific">Staphylococcus aureus (strain Mu50 / ATCC 700699)</name>
    <dbReference type="NCBI Taxonomy" id="158878"/>
    <lineage>
        <taxon>Bacteria</taxon>
        <taxon>Bacillati</taxon>
        <taxon>Bacillota</taxon>
        <taxon>Bacilli</taxon>
        <taxon>Bacillales</taxon>
        <taxon>Staphylococcaceae</taxon>
        <taxon>Staphylococcus</taxon>
    </lineage>
</organism>
<keyword id="KW-0067">ATP-binding</keyword>
<keyword id="KW-0418">Kinase</keyword>
<keyword id="KW-0423">Lactose metabolism</keyword>
<keyword id="KW-0547">Nucleotide-binding</keyword>
<keyword id="KW-0808">Transferase</keyword>
<dbReference type="EC" id="2.7.1.144" evidence="1"/>
<dbReference type="EMBL" id="BA000017">
    <property type="protein sequence ID" value="BAB58355.1"/>
    <property type="molecule type" value="Genomic_DNA"/>
</dbReference>
<dbReference type="RefSeq" id="WP_000604134.1">
    <property type="nucleotide sequence ID" value="NC_002758.2"/>
</dbReference>
<dbReference type="SMR" id="P65698"/>
<dbReference type="KEGG" id="sav:SAV2193"/>
<dbReference type="HOGENOM" id="CLU_050013_5_0_9"/>
<dbReference type="PhylomeDB" id="P65698"/>
<dbReference type="UniPathway" id="UPA00704">
    <property type="reaction ID" value="UER00715"/>
</dbReference>
<dbReference type="Proteomes" id="UP000002481">
    <property type="component" value="Chromosome"/>
</dbReference>
<dbReference type="GO" id="GO:0005829">
    <property type="term" value="C:cytosol"/>
    <property type="evidence" value="ECO:0007669"/>
    <property type="project" value="TreeGrafter"/>
</dbReference>
<dbReference type="GO" id="GO:0005524">
    <property type="term" value="F:ATP binding"/>
    <property type="evidence" value="ECO:0007669"/>
    <property type="project" value="UniProtKB-KW"/>
</dbReference>
<dbReference type="GO" id="GO:0008443">
    <property type="term" value="F:phosphofructokinase activity"/>
    <property type="evidence" value="ECO:0007669"/>
    <property type="project" value="TreeGrafter"/>
</dbReference>
<dbReference type="GO" id="GO:0009024">
    <property type="term" value="F:tagatose-6-phosphate kinase activity"/>
    <property type="evidence" value="ECO:0007669"/>
    <property type="project" value="UniProtKB-UniRule"/>
</dbReference>
<dbReference type="GO" id="GO:2001059">
    <property type="term" value="P:D-tagatose 6-phosphate catabolic process"/>
    <property type="evidence" value="ECO:0007669"/>
    <property type="project" value="UniProtKB-UniRule"/>
</dbReference>
<dbReference type="GO" id="GO:0019512">
    <property type="term" value="P:lactose catabolic process via tagatose-6-phosphate"/>
    <property type="evidence" value="ECO:0007669"/>
    <property type="project" value="InterPro"/>
</dbReference>
<dbReference type="CDD" id="cd01164">
    <property type="entry name" value="FruK_PfkB_like"/>
    <property type="match status" value="1"/>
</dbReference>
<dbReference type="FunFam" id="3.40.1190.20:FF:000001">
    <property type="entry name" value="Phosphofructokinase"/>
    <property type="match status" value="1"/>
</dbReference>
<dbReference type="Gene3D" id="3.40.1190.20">
    <property type="match status" value="1"/>
</dbReference>
<dbReference type="HAMAP" id="MF_01557">
    <property type="entry name" value="LacC"/>
    <property type="match status" value="1"/>
</dbReference>
<dbReference type="InterPro" id="IPR002173">
    <property type="entry name" value="Carboh/pur_kinase_PfkB_CS"/>
</dbReference>
<dbReference type="InterPro" id="IPR005926">
    <property type="entry name" value="LacC"/>
</dbReference>
<dbReference type="InterPro" id="IPR011611">
    <property type="entry name" value="PfkB_dom"/>
</dbReference>
<dbReference type="InterPro" id="IPR029056">
    <property type="entry name" value="Ribokinase-like"/>
</dbReference>
<dbReference type="InterPro" id="IPR017583">
    <property type="entry name" value="Tagatose/fructose_Pkinase"/>
</dbReference>
<dbReference type="NCBIfam" id="TIGR03168">
    <property type="entry name" value="1-PFK"/>
    <property type="match status" value="1"/>
</dbReference>
<dbReference type="NCBIfam" id="TIGR01231">
    <property type="entry name" value="lacC"/>
    <property type="match status" value="1"/>
</dbReference>
<dbReference type="NCBIfam" id="NF010033">
    <property type="entry name" value="PRK13508.1"/>
    <property type="match status" value="1"/>
</dbReference>
<dbReference type="PANTHER" id="PTHR46566:SF5">
    <property type="entry name" value="1-PHOSPHOFRUCTOKINASE"/>
    <property type="match status" value="1"/>
</dbReference>
<dbReference type="PANTHER" id="PTHR46566">
    <property type="entry name" value="1-PHOSPHOFRUCTOKINASE-RELATED"/>
    <property type="match status" value="1"/>
</dbReference>
<dbReference type="Pfam" id="PF00294">
    <property type="entry name" value="PfkB"/>
    <property type="match status" value="1"/>
</dbReference>
<dbReference type="PIRSF" id="PIRSF000535">
    <property type="entry name" value="1PFK/6PFK/LacC"/>
    <property type="match status" value="1"/>
</dbReference>
<dbReference type="SUPFAM" id="SSF53613">
    <property type="entry name" value="Ribokinase-like"/>
    <property type="match status" value="1"/>
</dbReference>
<dbReference type="PROSITE" id="PS00583">
    <property type="entry name" value="PFKB_KINASES_1"/>
    <property type="match status" value="1"/>
</dbReference>
<dbReference type="PROSITE" id="PS00584">
    <property type="entry name" value="PFKB_KINASES_2"/>
    <property type="match status" value="1"/>
</dbReference>
<gene>
    <name evidence="1" type="primary">lacC</name>
    <name type="ordered locus">SAV2193</name>
</gene>
<evidence type="ECO:0000255" key="1">
    <source>
        <dbReference type="HAMAP-Rule" id="MF_01557"/>
    </source>
</evidence>